<comment type="function">
    <text evidence="5 6">Ubiquitin-protein hydrolase involved in the release of ubiquitin attached via both peptide and isopeptide linkages. Able to cleave 'Lys-48'-linked polyubiquitin chains. Involved in the direct or indirect regulation of AUX/IAA proteins stability (Probable). Acts as a linker between the TREX-2 complex and 26S proteasome (PubMed:22951400).</text>
</comment>
<comment type="catalytic activity">
    <reaction evidence="7">
        <text>Thiol-dependent hydrolysis of ester, thioester, amide, peptide and isopeptide bonds formed by the C-terminal Gly of ubiquitin (a 76-residue protein attached to proteins as an intracellular targeting signal).</text>
        <dbReference type="EC" id="3.4.19.12"/>
    </reaction>
</comment>
<comment type="subunit">
    <text evidence="4 5">Heterodimer (PubMed:22951400). Interacts with EER5 (PubMed:19843313, PubMed:22951400). Interacts with UCH2, DSS1(V), DSS1(I), RPN3A, RPN3B, RPN12A, RPN12B, SAC3B, CML20 and NUP1 (PubMed:22951400).</text>
</comment>
<comment type="subcellular location">
    <subcellularLocation>
        <location evidence="3 5">Nucleus</location>
    </subcellularLocation>
    <subcellularLocation>
        <location evidence="3 5">Cytoplasm</location>
    </subcellularLocation>
</comment>
<comment type="tissue specificity">
    <text evidence="3">Expressed in leaves, stems, sepals, stamens, petals, roots, hypocotyls and cotyledons.</text>
</comment>
<comment type="disruption phenotype">
    <text evidence="3">No visible phenotype. Uch1 and uch2 double mutants are less fertile, accumulated less chlorophyll and have slightly fewer and shorter cauline branches.</text>
</comment>
<comment type="miscellaneous">
    <text evidence="3 5">UCH1 and UCH2 are not integral polypeptides of the 26S proteasome, unlike their S.pombe and animal orthologs (PubMed:17559514). However, they interact with the 26S proteasome lid complex as well as to the TREX-2 complex (PubMed:22951400).</text>
</comment>
<comment type="similarity">
    <text evidence="7">Belongs to the peptidase C12 family.</text>
</comment>
<organism>
    <name type="scientific">Arabidopsis thaliana</name>
    <name type="common">Mouse-ear cress</name>
    <dbReference type="NCBI Taxonomy" id="3702"/>
    <lineage>
        <taxon>Eukaryota</taxon>
        <taxon>Viridiplantae</taxon>
        <taxon>Streptophyta</taxon>
        <taxon>Embryophyta</taxon>
        <taxon>Tracheophyta</taxon>
        <taxon>Spermatophyta</taxon>
        <taxon>Magnoliopsida</taxon>
        <taxon>eudicotyledons</taxon>
        <taxon>Gunneridae</taxon>
        <taxon>Pentapetalae</taxon>
        <taxon>rosids</taxon>
        <taxon>malvids</taxon>
        <taxon>Brassicales</taxon>
        <taxon>Brassicaceae</taxon>
        <taxon>Camelineae</taxon>
        <taxon>Arabidopsis</taxon>
    </lineage>
</organism>
<keyword id="KW-0963">Cytoplasm</keyword>
<keyword id="KW-0378">Hydrolase</keyword>
<keyword id="KW-0539">Nucleus</keyword>
<keyword id="KW-0645">Protease</keyword>
<keyword id="KW-1185">Reference proteome</keyword>
<keyword id="KW-0788">Thiol protease</keyword>
<keyword id="KW-0833">Ubl conjugation pathway</keyword>
<sequence length="334" mass="38539">MSWLPVESDPGIFTEIIQQMQVKGVQVEELYSLDFNSLDEIRPVYGLILLYKWRPEEKENRVVITEPNPNFFFASQIINNACATQAILSVLMNSSSIDIGSELSELKQFAKEFPPELKGLAINNNEAIRAAHNTFARPDPSSIMEDEELAAAKNLDEDDDVYHYISYLPVDGILYELDGLKEGPISLGQCLGEPEGIEWLRMVQPVVQEQIDRYSQNEIRFSLLAVVKNRKEMYVAELKEYQRKRERVLQQLGALQADKYAEKSSYEALDRELSEVNIGIETVSQKIVMEEEKSKNWKKENMRRKHNYVPFLFNFLKILADKKKLKPLIAKHHP</sequence>
<name>UCH1_ARATH</name>
<gene>
    <name evidence="6" type="primary">UCH1</name>
    <name evidence="8" type="ordered locus">At5g16310</name>
    <name evidence="9" type="ORF">MQK4.3</name>
</gene>
<reference key="1">
    <citation type="journal article" date="1997" name="DNA Res.">
        <title>Structural analysis of Arabidopsis thaliana chromosome 5. I. Sequence features of the 1.6 Mb regions covered by twenty physically assigned P1 clones.</title>
        <authorList>
            <person name="Sato S."/>
            <person name="Kotani H."/>
            <person name="Nakamura Y."/>
            <person name="Kaneko T."/>
            <person name="Asamizu E."/>
            <person name="Fukami M."/>
            <person name="Miyajima N."/>
            <person name="Tabata S."/>
        </authorList>
    </citation>
    <scope>NUCLEOTIDE SEQUENCE [LARGE SCALE GENOMIC DNA]</scope>
    <source>
        <strain>cv. Columbia</strain>
    </source>
</reference>
<reference key="2">
    <citation type="journal article" date="2017" name="Plant J.">
        <title>Araport11: a complete reannotation of the Arabidopsis thaliana reference genome.</title>
        <authorList>
            <person name="Cheng C.Y."/>
            <person name="Krishnakumar V."/>
            <person name="Chan A.P."/>
            <person name="Thibaud-Nissen F."/>
            <person name="Schobel S."/>
            <person name="Town C.D."/>
        </authorList>
    </citation>
    <scope>GENOME REANNOTATION</scope>
    <source>
        <strain>cv. Columbia</strain>
    </source>
</reference>
<reference key="3">
    <citation type="journal article" date="2002" name="Science">
        <title>Functional annotation of a full-length Arabidopsis cDNA collection.</title>
        <authorList>
            <person name="Seki M."/>
            <person name="Narusaka M."/>
            <person name="Kamiya A."/>
            <person name="Ishida J."/>
            <person name="Satou M."/>
            <person name="Sakurai T."/>
            <person name="Nakajima M."/>
            <person name="Enju A."/>
            <person name="Akiyama K."/>
            <person name="Oono Y."/>
            <person name="Muramatsu M."/>
            <person name="Hayashizaki Y."/>
            <person name="Kawai J."/>
            <person name="Carninci P."/>
            <person name="Itoh M."/>
            <person name="Ishii Y."/>
            <person name="Arakawa T."/>
            <person name="Shibata K."/>
            <person name="Shinagawa A."/>
            <person name="Shinozaki K."/>
        </authorList>
    </citation>
    <scope>NUCLEOTIDE SEQUENCE [LARGE SCALE MRNA]</scope>
    <source>
        <strain>cv. Columbia</strain>
    </source>
</reference>
<reference key="4">
    <citation type="journal article" date="2003" name="Science">
        <title>Empirical analysis of transcriptional activity in the Arabidopsis genome.</title>
        <authorList>
            <person name="Yamada K."/>
            <person name="Lim J."/>
            <person name="Dale J.M."/>
            <person name="Chen H."/>
            <person name="Shinn P."/>
            <person name="Palm C.J."/>
            <person name="Southwick A.M."/>
            <person name="Wu H.C."/>
            <person name="Kim C.J."/>
            <person name="Nguyen M."/>
            <person name="Pham P.K."/>
            <person name="Cheuk R.F."/>
            <person name="Karlin-Newmann G."/>
            <person name="Liu S.X."/>
            <person name="Lam B."/>
            <person name="Sakano H."/>
            <person name="Wu T."/>
            <person name="Yu G."/>
            <person name="Miranda M."/>
            <person name="Quach H.L."/>
            <person name="Tripp M."/>
            <person name="Chang C.H."/>
            <person name="Lee J.M."/>
            <person name="Toriumi M.J."/>
            <person name="Chan M.M."/>
            <person name="Tang C.C."/>
            <person name="Onodera C.S."/>
            <person name="Deng J.M."/>
            <person name="Akiyama K."/>
            <person name="Ansari Y."/>
            <person name="Arakawa T."/>
            <person name="Banh J."/>
            <person name="Banno F."/>
            <person name="Bowser L."/>
            <person name="Brooks S.Y."/>
            <person name="Carninci P."/>
            <person name="Chao Q."/>
            <person name="Choy N."/>
            <person name="Enju A."/>
            <person name="Goldsmith A.D."/>
            <person name="Gurjal M."/>
            <person name="Hansen N.F."/>
            <person name="Hayashizaki Y."/>
            <person name="Johnson-Hopson C."/>
            <person name="Hsuan V.W."/>
            <person name="Iida K."/>
            <person name="Karnes M."/>
            <person name="Khan S."/>
            <person name="Koesema E."/>
            <person name="Ishida J."/>
            <person name="Jiang P.X."/>
            <person name="Jones T."/>
            <person name="Kawai J."/>
            <person name="Kamiya A."/>
            <person name="Meyers C."/>
            <person name="Nakajima M."/>
            <person name="Narusaka M."/>
            <person name="Seki M."/>
            <person name="Sakurai T."/>
            <person name="Satou M."/>
            <person name="Tamse R."/>
            <person name="Vaysberg M."/>
            <person name="Wallender E.K."/>
            <person name="Wong C."/>
            <person name="Yamamura Y."/>
            <person name="Yuan S."/>
            <person name="Shinozaki K."/>
            <person name="Davis R.W."/>
            <person name="Theologis A."/>
            <person name="Ecker J.R."/>
        </authorList>
    </citation>
    <scope>NUCLEOTIDE SEQUENCE [LARGE SCALE MRNA]</scope>
    <source>
        <strain>cv. Columbia</strain>
    </source>
</reference>
<reference key="5">
    <citation type="journal article" date="2007" name="Plant J.">
        <title>Ubiquitin C-terminal hydrolases 1 and 2 affect shoot architecture in Arabidopsis.</title>
        <authorList>
            <person name="Yang P."/>
            <person name="Smalle J."/>
            <person name="Lee S."/>
            <person name="Yan N."/>
            <person name="Emborg T.J."/>
            <person name="Vierstra R.D."/>
        </authorList>
    </citation>
    <scope>TISSUE SPECIFICITY</scope>
    <scope>SUBCELLULAR LOCATION</scope>
    <scope>GENE FAMILY</scope>
    <scope>NOMENCLATURE</scope>
    <scope>DISRUPTION PHENOTYPE</scope>
</reference>
<reference key="6">
    <citation type="journal article" date="2010" name="Plant J.">
        <title>Arabidopsis homolog of the yeast TREX-2 mRNA export complex: components and anchoring nucleoporin.</title>
        <authorList>
            <person name="Lu Q."/>
            <person name="Tang X."/>
            <person name="Tian G."/>
            <person name="Wang F."/>
            <person name="Liu K."/>
            <person name="Nguyen V."/>
            <person name="Kohalmi S.E."/>
            <person name="Keller W.A."/>
            <person name="Tsang E.W."/>
            <person name="Harada J.J."/>
            <person name="Rothstein S.J."/>
            <person name="Cui Y."/>
        </authorList>
    </citation>
    <scope>INTERACTION WITH EER5</scope>
</reference>
<reference key="7">
    <citation type="journal article" date="2012" name="Plant Signal. Behav.">
        <title>Evidence that the Arabidopsis Ubiquitin C-terminal Hydrolases 1 and 2 associate with the 26S proteasome and the TREX-2 complex.</title>
        <authorList>
            <person name="Tian G."/>
            <person name="Lu Q."/>
            <person name="Kohalmi S.E."/>
            <person name="Rothstein S.J."/>
            <person name="Cui Y."/>
        </authorList>
    </citation>
    <scope>INTERACTION WITH UCH2; DSS1(V); DSS1(I); EER5; RPN3A; RPN3B; RPN12A; RPN12B; SAC3B; CML20 AND NUP1</scope>
    <scope>SUBCELLULAR LOCATION</scope>
    <scope>SUBUNIT</scope>
</reference>
<evidence type="ECO:0000255" key="1">
    <source>
        <dbReference type="PROSITE-ProRule" id="PRU01393"/>
    </source>
</evidence>
<evidence type="ECO:0000255" key="2">
    <source>
        <dbReference type="PROSITE-ProRule" id="PRU01394"/>
    </source>
</evidence>
<evidence type="ECO:0000269" key="3">
    <source>
    </source>
</evidence>
<evidence type="ECO:0000269" key="4">
    <source>
    </source>
</evidence>
<evidence type="ECO:0000269" key="5">
    <source>
    </source>
</evidence>
<evidence type="ECO:0000303" key="6">
    <source>
    </source>
</evidence>
<evidence type="ECO:0000305" key="7"/>
<evidence type="ECO:0000312" key="8">
    <source>
        <dbReference type="Araport" id="AT5G16310"/>
    </source>
</evidence>
<evidence type="ECO:0000312" key="9">
    <source>
        <dbReference type="EMBL" id="BAC42635.1"/>
    </source>
</evidence>
<feature type="chain" id="PRO_0000435406" description="Ubiquitin carboxyl-terminal hydrolase">
    <location>
        <begin position="1"/>
        <end position="334"/>
    </location>
</feature>
<feature type="domain" description="UCH catalytic" evidence="1">
    <location>
        <begin position="2"/>
        <end position="228"/>
    </location>
</feature>
<feature type="domain" description="ULD" evidence="2">
    <location>
        <begin position="307"/>
        <end position="334"/>
    </location>
</feature>
<feature type="active site" description="Nucleophile" evidence="1">
    <location>
        <position position="82"/>
    </location>
</feature>
<feature type="active site" description="Proton donor" evidence="1">
    <location>
        <position position="163"/>
    </location>
</feature>
<feature type="site" description="Transition state stabilizer" evidence="1">
    <location>
        <position position="76"/>
    </location>
</feature>
<feature type="site" description="Important for enzyme activity" evidence="1">
    <location>
        <position position="178"/>
    </location>
</feature>
<protein>
    <recommendedName>
        <fullName evidence="6">Ubiquitin carboxyl-terminal hydrolase</fullName>
        <ecNumber evidence="7">3.4.19.12</ecNumber>
    </recommendedName>
</protein>
<proteinExistence type="evidence at protein level"/>
<dbReference type="EC" id="3.4.19.12" evidence="7"/>
<dbReference type="EMBL" id="AB005242">
    <property type="protein sequence ID" value="BAB09598.1"/>
    <property type="molecule type" value="Genomic_DNA"/>
</dbReference>
<dbReference type="EMBL" id="CP002688">
    <property type="protein sequence ID" value="AED92278.1"/>
    <property type="molecule type" value="Genomic_DNA"/>
</dbReference>
<dbReference type="EMBL" id="AK118002">
    <property type="protein sequence ID" value="BAC42635.1"/>
    <property type="molecule type" value="mRNA"/>
</dbReference>
<dbReference type="EMBL" id="BT005312">
    <property type="protein sequence ID" value="AAO63376.1"/>
    <property type="molecule type" value="mRNA"/>
</dbReference>
<dbReference type="RefSeq" id="NP_197135.1">
    <property type="nucleotide sequence ID" value="NM_121636.3"/>
</dbReference>
<dbReference type="SMR" id="Q9FFF2"/>
<dbReference type="FunCoup" id="Q9FFF2">
    <property type="interactions" value="4089"/>
</dbReference>
<dbReference type="IntAct" id="Q9FFF2">
    <property type="interactions" value="3"/>
</dbReference>
<dbReference type="STRING" id="3702.Q9FFF2"/>
<dbReference type="MEROPS" id="C12.A01"/>
<dbReference type="PaxDb" id="3702-AT5G16310.1"/>
<dbReference type="ProteomicsDB" id="243219"/>
<dbReference type="EnsemblPlants" id="AT5G16310.1">
    <property type="protein sequence ID" value="AT5G16310.1"/>
    <property type="gene ID" value="AT5G16310"/>
</dbReference>
<dbReference type="GeneID" id="831492"/>
<dbReference type="Gramene" id="AT5G16310.1">
    <property type="protein sequence ID" value="AT5G16310.1"/>
    <property type="gene ID" value="AT5G16310"/>
</dbReference>
<dbReference type="KEGG" id="ath:AT5G16310"/>
<dbReference type="Araport" id="AT5G16310"/>
<dbReference type="TAIR" id="AT5G16310">
    <property type="gene designation" value="UCH1"/>
</dbReference>
<dbReference type="eggNOG" id="KOG2778">
    <property type="taxonomic scope" value="Eukaryota"/>
</dbReference>
<dbReference type="HOGENOM" id="CLU_018316_0_1_1"/>
<dbReference type="InParanoid" id="Q9FFF2"/>
<dbReference type="OMA" id="RKEMYVA"/>
<dbReference type="PhylomeDB" id="Q9FFF2"/>
<dbReference type="PRO" id="PR:Q9FFF2"/>
<dbReference type="Proteomes" id="UP000006548">
    <property type="component" value="Chromosome 5"/>
</dbReference>
<dbReference type="ExpressionAtlas" id="Q9FFF2">
    <property type="expression patterns" value="baseline and differential"/>
</dbReference>
<dbReference type="GO" id="GO:0005737">
    <property type="term" value="C:cytoplasm"/>
    <property type="evidence" value="ECO:0000314"/>
    <property type="project" value="TAIR"/>
</dbReference>
<dbReference type="GO" id="GO:0031011">
    <property type="term" value="C:Ino80 complex"/>
    <property type="evidence" value="ECO:0000314"/>
    <property type="project" value="TAIR"/>
</dbReference>
<dbReference type="GO" id="GO:0005634">
    <property type="term" value="C:nucleus"/>
    <property type="evidence" value="ECO:0000314"/>
    <property type="project" value="TAIR"/>
</dbReference>
<dbReference type="GO" id="GO:0004843">
    <property type="term" value="F:cysteine-type deubiquitinase activity"/>
    <property type="evidence" value="ECO:0007669"/>
    <property type="project" value="UniProtKB-EC"/>
</dbReference>
<dbReference type="GO" id="GO:0016579">
    <property type="term" value="P:protein deubiquitination"/>
    <property type="evidence" value="ECO:0007669"/>
    <property type="project" value="InterPro"/>
</dbReference>
<dbReference type="GO" id="GO:0010016">
    <property type="term" value="P:shoot system morphogenesis"/>
    <property type="evidence" value="ECO:0000316"/>
    <property type="project" value="TAIR"/>
</dbReference>
<dbReference type="GO" id="GO:0006511">
    <property type="term" value="P:ubiquitin-dependent protein catabolic process"/>
    <property type="evidence" value="ECO:0007669"/>
    <property type="project" value="InterPro"/>
</dbReference>
<dbReference type="CDD" id="cd09617">
    <property type="entry name" value="Peptidase_C12_UCH37_BAP1"/>
    <property type="match status" value="1"/>
</dbReference>
<dbReference type="FunFam" id="1.20.58.860:FF:000003">
    <property type="entry name" value="Ubiquitin carboxyl-terminal hydrolase"/>
    <property type="match status" value="1"/>
</dbReference>
<dbReference type="FunFam" id="3.40.532.10:FF:000003">
    <property type="entry name" value="Ubiquitin carboxyl-terminal hydrolase"/>
    <property type="match status" value="1"/>
</dbReference>
<dbReference type="Gene3D" id="1.20.58.860">
    <property type="match status" value="1"/>
</dbReference>
<dbReference type="Gene3D" id="3.40.532.10">
    <property type="entry name" value="Peptidase C12, ubiquitin carboxyl-terminal hydrolase"/>
    <property type="match status" value="1"/>
</dbReference>
<dbReference type="InterPro" id="IPR038765">
    <property type="entry name" value="Papain-like_cys_pep_sf"/>
</dbReference>
<dbReference type="InterPro" id="IPR001578">
    <property type="entry name" value="Peptidase_C12_UCH"/>
</dbReference>
<dbReference type="InterPro" id="IPR036959">
    <property type="entry name" value="Peptidase_C12_UCH_sf"/>
</dbReference>
<dbReference type="InterPro" id="IPR017390">
    <property type="entry name" value="Ubiquitinyl_hydrolase_UCH37"/>
</dbReference>
<dbReference type="InterPro" id="IPR041507">
    <property type="entry name" value="UCH_C"/>
</dbReference>
<dbReference type="PANTHER" id="PTHR10589">
    <property type="entry name" value="UBIQUITIN CARBOXYL-TERMINAL HYDROLASE"/>
    <property type="match status" value="1"/>
</dbReference>
<dbReference type="PANTHER" id="PTHR10589:SF16">
    <property type="entry name" value="UBIQUITIN CARBOXYL-TERMINAL HYDROLASE ISOZYME L5"/>
    <property type="match status" value="1"/>
</dbReference>
<dbReference type="Pfam" id="PF01088">
    <property type="entry name" value="Peptidase_C12"/>
    <property type="match status" value="1"/>
</dbReference>
<dbReference type="Pfam" id="PF18031">
    <property type="entry name" value="UCH_C"/>
    <property type="match status" value="1"/>
</dbReference>
<dbReference type="PIRSF" id="PIRSF038120">
    <property type="entry name" value="Ubiquitinyl_hydrolase_UCH37"/>
    <property type="match status" value="1"/>
</dbReference>
<dbReference type="PRINTS" id="PR00707">
    <property type="entry name" value="UBCTHYDRLASE"/>
</dbReference>
<dbReference type="SUPFAM" id="SSF54001">
    <property type="entry name" value="Cysteine proteinases"/>
    <property type="match status" value="1"/>
</dbReference>
<dbReference type="PROSITE" id="PS52048">
    <property type="entry name" value="UCH_DOMAIN"/>
    <property type="match status" value="1"/>
</dbReference>
<dbReference type="PROSITE" id="PS52049">
    <property type="entry name" value="ULD"/>
    <property type="match status" value="1"/>
</dbReference>
<accession>Q9FFF2</accession>